<dbReference type="EC" id="3.6.1.1" evidence="1"/>
<dbReference type="EMBL" id="AJ252206">
    <property type="protein sequence ID" value="CAC81009.2"/>
    <property type="molecule type" value="Genomic_DNA"/>
</dbReference>
<dbReference type="EMBL" id="BA000019">
    <property type="protein sequence ID" value="BAB75269.1"/>
    <property type="molecule type" value="Genomic_DNA"/>
</dbReference>
<dbReference type="PIR" id="AC2252">
    <property type="entry name" value="AC2252"/>
</dbReference>
<dbReference type="RefSeq" id="WP_010997720.1">
    <property type="nucleotide sequence ID" value="NZ_RSCN01000034.1"/>
</dbReference>
<dbReference type="SMR" id="P80562"/>
<dbReference type="STRING" id="103690.gene:10495611"/>
<dbReference type="KEGG" id="ana:all3570"/>
<dbReference type="eggNOG" id="COG0221">
    <property type="taxonomic scope" value="Bacteria"/>
</dbReference>
<dbReference type="OrthoDB" id="5187599at2"/>
<dbReference type="BRENDA" id="3.6.1.1">
    <property type="organism ID" value="319"/>
</dbReference>
<dbReference type="SABIO-RK" id="P80562"/>
<dbReference type="Proteomes" id="UP000002483">
    <property type="component" value="Chromosome"/>
</dbReference>
<dbReference type="GO" id="GO:0005737">
    <property type="term" value="C:cytoplasm"/>
    <property type="evidence" value="ECO:0007669"/>
    <property type="project" value="UniProtKB-SubCell"/>
</dbReference>
<dbReference type="GO" id="GO:0004427">
    <property type="term" value="F:inorganic diphosphate phosphatase activity"/>
    <property type="evidence" value="ECO:0007669"/>
    <property type="project" value="UniProtKB-UniRule"/>
</dbReference>
<dbReference type="GO" id="GO:0000287">
    <property type="term" value="F:magnesium ion binding"/>
    <property type="evidence" value="ECO:0007669"/>
    <property type="project" value="UniProtKB-UniRule"/>
</dbReference>
<dbReference type="GO" id="GO:0006796">
    <property type="term" value="P:phosphate-containing compound metabolic process"/>
    <property type="evidence" value="ECO:0007669"/>
    <property type="project" value="InterPro"/>
</dbReference>
<dbReference type="CDD" id="cd00412">
    <property type="entry name" value="pyrophosphatase"/>
    <property type="match status" value="1"/>
</dbReference>
<dbReference type="FunFam" id="3.90.80.10:FF:000003">
    <property type="entry name" value="Inorganic pyrophosphatase"/>
    <property type="match status" value="1"/>
</dbReference>
<dbReference type="Gene3D" id="3.90.80.10">
    <property type="entry name" value="Inorganic pyrophosphatase"/>
    <property type="match status" value="1"/>
</dbReference>
<dbReference type="HAMAP" id="MF_00209">
    <property type="entry name" value="Inorganic_PPase"/>
    <property type="match status" value="1"/>
</dbReference>
<dbReference type="InterPro" id="IPR008162">
    <property type="entry name" value="Pyrophosphatase"/>
</dbReference>
<dbReference type="InterPro" id="IPR036649">
    <property type="entry name" value="Pyrophosphatase_sf"/>
</dbReference>
<dbReference type="PANTHER" id="PTHR10286">
    <property type="entry name" value="INORGANIC PYROPHOSPHATASE"/>
    <property type="match status" value="1"/>
</dbReference>
<dbReference type="Pfam" id="PF00719">
    <property type="entry name" value="Pyrophosphatase"/>
    <property type="match status" value="1"/>
</dbReference>
<dbReference type="SUPFAM" id="SSF50324">
    <property type="entry name" value="Inorganic pyrophosphatase"/>
    <property type="match status" value="1"/>
</dbReference>
<dbReference type="PROSITE" id="PS00387">
    <property type="entry name" value="PPASE"/>
    <property type="match status" value="1"/>
</dbReference>
<keyword id="KW-0963">Cytoplasm</keyword>
<keyword id="KW-0903">Direct protein sequencing</keyword>
<keyword id="KW-0291">Formylation</keyword>
<keyword id="KW-0378">Hydrolase</keyword>
<keyword id="KW-0460">Magnesium</keyword>
<keyword id="KW-0479">Metal-binding</keyword>
<keyword id="KW-1185">Reference proteome</keyword>
<gene>
    <name evidence="1" type="primary">ppa</name>
    <name type="ordered locus">all3570</name>
</gene>
<evidence type="ECO:0000255" key="1">
    <source>
        <dbReference type="HAMAP-Rule" id="MF_00209"/>
    </source>
</evidence>
<evidence type="ECO:0000269" key="2">
    <source>
    </source>
</evidence>
<evidence type="ECO:0000305" key="3"/>
<feature type="chain" id="PRO_0000137474" description="Inorganic pyrophosphatase">
    <location>
        <begin position="1"/>
        <end position="169"/>
    </location>
</feature>
<feature type="binding site" evidence="1">
    <location>
        <position position="28"/>
    </location>
    <ligand>
        <name>substrate</name>
    </ligand>
</feature>
<feature type="binding site" evidence="1">
    <location>
        <position position="42"/>
    </location>
    <ligand>
        <name>substrate</name>
    </ligand>
</feature>
<feature type="binding site" evidence="1">
    <location>
        <position position="54"/>
    </location>
    <ligand>
        <name>substrate</name>
    </ligand>
</feature>
<feature type="binding site" evidence="1">
    <location>
        <position position="64"/>
    </location>
    <ligand>
        <name>Mg(2+)</name>
        <dbReference type="ChEBI" id="CHEBI:18420"/>
        <label>1</label>
    </ligand>
</feature>
<feature type="binding site" evidence="1">
    <location>
        <position position="69"/>
    </location>
    <ligand>
        <name>Mg(2+)</name>
        <dbReference type="ChEBI" id="CHEBI:18420"/>
        <label>1</label>
    </ligand>
</feature>
<feature type="binding site" evidence="1">
    <location>
        <position position="69"/>
    </location>
    <ligand>
        <name>Mg(2+)</name>
        <dbReference type="ChEBI" id="CHEBI:18420"/>
        <label>2</label>
    </ligand>
</feature>
<feature type="binding site" evidence="1">
    <location>
        <position position="101"/>
    </location>
    <ligand>
        <name>Mg(2+)</name>
        <dbReference type="ChEBI" id="CHEBI:18420"/>
        <label>1</label>
    </ligand>
</feature>
<feature type="binding site" evidence="1">
    <location>
        <position position="138"/>
    </location>
    <ligand>
        <name>substrate</name>
    </ligand>
</feature>
<feature type="modified residue" description="N-formylmethionine" evidence="2">
    <location>
        <position position="1"/>
    </location>
</feature>
<feature type="sequence conflict" description="In Ref. 1; CAC81009." evidence="3" ref="1">
    <original>V</original>
    <variation>R</variation>
    <location>
        <position position="117"/>
    </location>
</feature>
<feature type="sequence conflict" description="In Ref. 1; CAC81009." evidence="3" ref="1">
    <original>IL</original>
    <variation>SV</variation>
    <location>
        <begin position="148"/>
        <end position="149"/>
    </location>
</feature>
<feature type="sequence conflict" description="In Ref. 1; CAC81009." evidence="3" ref="1">
    <original>QSI</original>
    <variation>HPV</variation>
    <location>
        <begin position="163"/>
        <end position="165"/>
    </location>
</feature>
<feature type="sequence conflict" description="In Ref. 1; CAC81009." evidence="3" ref="1">
    <original>K</original>
    <variation>T</variation>
    <location>
        <position position="169"/>
    </location>
</feature>
<protein>
    <recommendedName>
        <fullName evidence="1">Inorganic pyrophosphatase</fullName>
        <ecNumber evidence="1">3.6.1.1</ecNumber>
    </recommendedName>
    <alternativeName>
        <fullName evidence="1">Pyrophosphate phospho-hydrolase</fullName>
        <shortName evidence="1">PPase</shortName>
    </alternativeName>
</protein>
<reference key="1">
    <citation type="journal article" date="2007" name="FEBS J.">
        <title>Comparative biochemical and functional studies of family I soluble inorganic pyrophosphatases from photosynthetic bacteria.</title>
        <authorList>
            <person name="Gomez-Garcia M.R."/>
            <person name="Losada M."/>
            <person name="Serrano A."/>
        </authorList>
    </citation>
    <scope>NUCLEOTIDE SEQUENCE [GENOMIC DNA]</scope>
    <scope>PROTEIN SEQUENCE OF 1-23</scope>
    <scope>CATALYTIC ACTIVITY</scope>
    <scope>COFACTOR</scope>
    <scope>BIOPHYSICOCHEMICAL PROPERTIES</scope>
    <scope>SUBUNIT</scope>
    <scope>FORMYLATION AT MET-1</scope>
</reference>
<reference key="2">
    <citation type="journal article" date="2001" name="DNA Res.">
        <title>Complete genomic sequence of the filamentous nitrogen-fixing cyanobacterium Anabaena sp. strain PCC 7120.</title>
        <authorList>
            <person name="Kaneko T."/>
            <person name="Nakamura Y."/>
            <person name="Wolk C.P."/>
            <person name="Kuritz T."/>
            <person name="Sasamoto S."/>
            <person name="Watanabe A."/>
            <person name="Iriguchi M."/>
            <person name="Ishikawa A."/>
            <person name="Kawashima K."/>
            <person name="Kimura T."/>
            <person name="Kishida Y."/>
            <person name="Kohara M."/>
            <person name="Matsumoto M."/>
            <person name="Matsuno A."/>
            <person name="Muraki A."/>
            <person name="Nakazaki N."/>
            <person name="Shimpo S."/>
            <person name="Sugimoto M."/>
            <person name="Takazawa M."/>
            <person name="Yamada M."/>
            <person name="Yasuda M."/>
            <person name="Tabata S."/>
        </authorList>
    </citation>
    <scope>NUCLEOTIDE SEQUENCE [LARGE SCALE GENOMIC DNA]</scope>
    <source>
        <strain>PCC 7120 / SAG 25.82 / UTEX 2576</strain>
    </source>
</reference>
<proteinExistence type="evidence at protein level"/>
<comment type="function">
    <text evidence="1 2">Catalyzes the hydrolysis of inorganic pyrophosphate (PPi) forming two phosphate ions.</text>
</comment>
<comment type="catalytic activity">
    <reaction evidence="1 2">
        <text>diphosphate + H2O = 2 phosphate + H(+)</text>
        <dbReference type="Rhea" id="RHEA:24576"/>
        <dbReference type="ChEBI" id="CHEBI:15377"/>
        <dbReference type="ChEBI" id="CHEBI:15378"/>
        <dbReference type="ChEBI" id="CHEBI:33019"/>
        <dbReference type="ChEBI" id="CHEBI:43474"/>
        <dbReference type="EC" id="3.6.1.1"/>
    </reaction>
</comment>
<comment type="cofactor">
    <cofactor evidence="1 2">
        <name>Mg(2+)</name>
        <dbReference type="ChEBI" id="CHEBI:18420"/>
    </cofactor>
    <text evidence="2">In the presence of Zn(2+), Mn(2+), Cu(2+), Fe(2+) or Co(2+) ions, activity is very low. In the absence of metal ions, there is no activity.</text>
</comment>
<comment type="biophysicochemical properties">
    <kinetics>
        <KM evidence="2">3 uM for PPi</KM>
    </kinetics>
</comment>
<comment type="subunit">
    <text evidence="1 2">Homohexamer.</text>
</comment>
<comment type="subcellular location">
    <subcellularLocation>
        <location evidence="1">Cytoplasm</location>
    </subcellularLocation>
</comment>
<comment type="similarity">
    <text evidence="1">Belongs to the PPase family.</text>
</comment>
<organism>
    <name type="scientific">Nostoc sp. (strain PCC 7120 / SAG 25.82 / UTEX 2576)</name>
    <dbReference type="NCBI Taxonomy" id="103690"/>
    <lineage>
        <taxon>Bacteria</taxon>
        <taxon>Bacillati</taxon>
        <taxon>Cyanobacteriota</taxon>
        <taxon>Cyanophyceae</taxon>
        <taxon>Nostocales</taxon>
        <taxon>Nostocaceae</taxon>
        <taxon>Nostoc</taxon>
    </lineage>
</organism>
<sequence length="169" mass="18961">MDLSRIPAQPKPGVINILIEIAGGSQNKYEFDKDLEAFALDRVLYSSVKYPYDYGFVPNTLADDGDPLDGMVIIDEPTFPGCVIAARPIGFLEMIDGGDRDEKILAVPDKDPRYAHVKSLNDVAPHRLDEIAEFFRSYKNLEKKVTQILGWQDVDQVKALVDQSIKAYK</sequence>
<name>IPYR_NOSS1</name>
<accession>P80562</accession>
<accession>Q8YR78</accession>